<protein>
    <recommendedName>
        <fullName evidence="2">DNA helicase/primase</fullName>
        <ecNumber evidence="2">2.7.7.-</ecNumber>
        <ecNumber evidence="2">3.6.4.12</ecNumber>
    </recommendedName>
    <alternativeName>
        <fullName>Gene product 4</fullName>
        <shortName>Gp4</shortName>
    </alternativeName>
</protein>
<reference key="1">
    <citation type="journal article" date="1989" name="J. Mol. Biol.">
        <title>Sequence of bacteriophage T3 DNA from gene 2.5 through gene 9.</title>
        <authorList>
            <person name="Beck P.J."/>
            <person name="Gonzalez S."/>
            <person name="Ward C.L."/>
            <person name="Molineux I.J."/>
        </authorList>
    </citation>
    <scope>NUCLEOTIDE SEQUENCE [GENOMIC DNA]</scope>
    <scope>ALTERNATIVE INITIATION</scope>
    <source>
        <strain>Luria</strain>
    </source>
</reference>
<organismHost>
    <name type="scientific">Escherichia coli</name>
    <dbReference type="NCBI Taxonomy" id="562"/>
</organismHost>
<evidence type="ECO:0000250" key="1">
    <source>
        <dbReference type="UniProtKB" id="P03692"/>
    </source>
</evidence>
<evidence type="ECO:0000255" key="2">
    <source>
        <dbReference type="HAMAP-Rule" id="MF_04154"/>
    </source>
</evidence>
<evidence type="ECO:0000255" key="3">
    <source>
        <dbReference type="PROSITE-ProRule" id="PRU00995"/>
    </source>
</evidence>
<evidence type="ECO:0000256" key="4">
    <source>
        <dbReference type="SAM" id="MobiDB-lite"/>
    </source>
</evidence>
<evidence type="ECO:0000305" key="5"/>
<sequence length="566" mass="62741">MEREDDSIFLFHAPCENCGSSDGNSVYSDGHEWCFVCEHRVPANEEREAKLSTRRRTGGSKPMSYDVWNFGDSNGRYSDLTARGISKETCQKAGYWLAKVDNRMYQVADYRDQNGSIVSQKVRDKDKNFKTTGSHKSDALFLKHLWSGGKKIVVTEGEIDALTVMELQDCKYPVVSLGHGASAAKKTCAANYEYFDQFEQIILMFDMDDAGRKAVEEAAQVLPAGKVRVAVLPCKDANECHIMGEDKAILEQVWNANPWVPDGVVSALSLKDRVKEAMTSEDAVGLLFDGCQGLNDRTLGARGGEVVMVTSGSGMGKSTFVRQQALAWGKRMGKRVGLAMLEESVEDTIQDMMGLNNKVRLRQSDEVKKAIAEDGRFDEWYDELFGDDTFHLYDSFAEAEADRLLAKLAYMRTGLGCDVIVLDHISIVVSASEESDERKMIDRLMTKLKGFAKSTGVVLVVICHLKNPEKGKAHEEGRAVSITDLRGSGALRQLSDTIIALERNQQGDMPNLVLVRLLKCRFTGDTGIAGYMEYNRETGWLEPSSYTGGEGEGDTGWTEQDGQSDF</sequence>
<name>HELIC_BPT3</name>
<proteinExistence type="inferred from homology"/>
<keyword id="KW-0024">Alternative initiation</keyword>
<keyword id="KW-0067">ATP-binding</keyword>
<keyword id="KW-0235">DNA replication</keyword>
<keyword id="KW-0238">DNA-binding</keyword>
<keyword id="KW-0240">DNA-directed RNA polymerase</keyword>
<keyword id="KW-0347">Helicase</keyword>
<keyword id="KW-0378">Hydrolase</keyword>
<keyword id="KW-0426">Late protein</keyword>
<keyword id="KW-0460">Magnesium</keyword>
<keyword id="KW-0479">Metal-binding</keyword>
<keyword id="KW-0511">Multifunctional enzyme</keyword>
<keyword id="KW-0547">Nucleotide-binding</keyword>
<keyword id="KW-0548">Nucleotidyltransferase</keyword>
<keyword id="KW-0639">Primosome</keyword>
<keyword id="KW-0804">Transcription</keyword>
<keyword id="KW-0808">Transferase</keyword>
<keyword id="KW-1194">Viral DNA replication</keyword>
<keyword id="KW-0862">Zinc</keyword>
<keyword id="KW-0863">Zinc-finger</keyword>
<feature type="chain" id="PRO_0000003353" description="DNA helicase/primase">
    <location>
        <begin position="1"/>
        <end position="566"/>
    </location>
</feature>
<feature type="domain" description="Toprim" evidence="3">
    <location>
        <begin position="150"/>
        <end position="237"/>
    </location>
</feature>
<feature type="domain" description="SF4 helicase" evidence="2">
    <location>
        <begin position="280"/>
        <end position="547"/>
    </location>
</feature>
<feature type="zinc finger region" description="C4-like; zinc ribbon fold" evidence="2">
    <location>
        <begin position="15"/>
        <end position="37"/>
    </location>
</feature>
<feature type="region of interest" description="Disordered" evidence="4">
    <location>
        <begin position="542"/>
        <end position="566"/>
    </location>
</feature>
<feature type="region of interest" description="Binding to viral DNA polymerase" evidence="2">
    <location>
        <begin position="549"/>
        <end position="566"/>
    </location>
</feature>
<feature type="compositionally biased region" description="Low complexity" evidence="4">
    <location>
        <begin position="555"/>
        <end position="566"/>
    </location>
</feature>
<feature type="binding site" evidence="2">
    <location>
        <position position="15"/>
    </location>
    <ligand>
        <name>Zn(2+)</name>
        <dbReference type="ChEBI" id="CHEBI:29105"/>
    </ligand>
</feature>
<feature type="binding site" evidence="2">
    <location>
        <position position="18"/>
    </location>
    <ligand>
        <name>Zn(2+)</name>
        <dbReference type="ChEBI" id="CHEBI:29105"/>
    </ligand>
</feature>
<feature type="binding site" evidence="2">
    <location>
        <position position="34"/>
    </location>
    <ligand>
        <name>Zn(2+)</name>
        <dbReference type="ChEBI" id="CHEBI:29105"/>
    </ligand>
</feature>
<feature type="binding site" evidence="2">
    <location>
        <position position="37"/>
    </location>
    <ligand>
        <name>Zn(2+)</name>
        <dbReference type="ChEBI" id="CHEBI:29105"/>
    </ligand>
</feature>
<feature type="binding site" evidence="2">
    <location>
        <position position="156"/>
    </location>
    <ligand>
        <name>Mg(2+)</name>
        <dbReference type="ChEBI" id="CHEBI:18420"/>
        <label>1</label>
        <note>catalytic</note>
    </ligand>
</feature>
<feature type="binding site" evidence="2">
    <location>
        <position position="206"/>
    </location>
    <ligand>
        <name>Mg(2+)</name>
        <dbReference type="ChEBI" id="CHEBI:18420"/>
        <label>1</label>
        <note>catalytic</note>
    </ligand>
</feature>
<feature type="binding site" evidence="2">
    <location>
        <position position="236"/>
    </location>
    <ligand>
        <name>Mg(2+)</name>
        <dbReference type="ChEBI" id="CHEBI:18420"/>
        <label>2</label>
    </ligand>
</feature>
<feature type="binding site" evidence="2">
    <location>
        <begin position="311"/>
        <end position="318"/>
    </location>
    <ligand>
        <name>ATP</name>
        <dbReference type="ChEBI" id="CHEBI:30616"/>
    </ligand>
</feature>
<feature type="site" description="dTTP/dATP binding" evidence="2">
    <location>
        <position position="360"/>
    </location>
</feature>
<feature type="site" description="dTTP/dATP binding" evidence="2">
    <location>
        <position position="464"/>
    </location>
</feature>
<feature type="site" description="dTTP/dATP binding" evidence="2">
    <location>
        <position position="503"/>
    </location>
</feature>
<feature type="site" description="dTTP/dATP binding" evidence="2">
    <location>
        <position position="521"/>
    </location>
</feature>
<feature type="site" description="dTTP/dATP binding" evidence="2">
    <location>
        <position position="534"/>
    </location>
</feature>
<feature type="splice variant" id="VSP_018682" description="In isoform 4B." evidence="5">
    <location>
        <begin position="1"/>
        <end position="62"/>
    </location>
</feature>
<gene>
    <name type="primary">4</name>
</gene>
<dbReference type="EC" id="2.7.7.-" evidence="2"/>
<dbReference type="EC" id="3.6.4.12" evidence="2"/>
<dbReference type="EMBL" id="X17255">
    <property type="protein sequence ID" value="CAA35135.1"/>
    <property type="molecule type" value="Genomic_DNA"/>
</dbReference>
<dbReference type="EMBL" id="X17255">
    <property type="protein sequence ID" value="CAA35136.1"/>
    <property type="molecule type" value="Genomic_DNA"/>
</dbReference>
<dbReference type="PIR" id="S07508">
    <property type="entry name" value="S07508"/>
</dbReference>
<dbReference type="RefSeq" id="NP_523315.1">
    <molecule id="P20315-1"/>
    <property type="nucleotide sequence ID" value="NC_003298.1"/>
</dbReference>
<dbReference type="RefSeq" id="NP_523316.1">
    <molecule id="P20315-2"/>
    <property type="nucleotide sequence ID" value="NC_003298.1"/>
</dbReference>
<dbReference type="SMR" id="P20315"/>
<dbReference type="KEGG" id="vg:927429"/>
<dbReference type="KEGG" id="vg:927458"/>
<dbReference type="OrthoDB" id="615at10239"/>
<dbReference type="GO" id="GO:0000428">
    <property type="term" value="C:DNA-directed RNA polymerase complex"/>
    <property type="evidence" value="ECO:0007669"/>
    <property type="project" value="UniProtKB-KW"/>
</dbReference>
<dbReference type="GO" id="GO:0043139">
    <property type="term" value="F:5'-3' DNA helicase activity"/>
    <property type="evidence" value="ECO:0007669"/>
    <property type="project" value="InterPro"/>
</dbReference>
<dbReference type="GO" id="GO:0005524">
    <property type="term" value="F:ATP binding"/>
    <property type="evidence" value="ECO:0007669"/>
    <property type="project" value="UniProtKB-UniRule"/>
</dbReference>
<dbReference type="GO" id="GO:0016887">
    <property type="term" value="F:ATP hydrolysis activity"/>
    <property type="evidence" value="ECO:0007669"/>
    <property type="project" value="RHEA"/>
</dbReference>
<dbReference type="GO" id="GO:0016779">
    <property type="term" value="F:nucleotidyltransferase activity"/>
    <property type="evidence" value="ECO:0007669"/>
    <property type="project" value="UniProtKB-KW"/>
</dbReference>
<dbReference type="GO" id="GO:0003697">
    <property type="term" value="F:single-stranded DNA binding"/>
    <property type="evidence" value="ECO:0007669"/>
    <property type="project" value="InterPro"/>
</dbReference>
<dbReference type="GO" id="GO:0008270">
    <property type="term" value="F:zinc ion binding"/>
    <property type="evidence" value="ECO:0007669"/>
    <property type="project" value="UniProtKB-UniRule"/>
</dbReference>
<dbReference type="GO" id="GO:0006269">
    <property type="term" value="P:DNA replication, synthesis of primer"/>
    <property type="evidence" value="ECO:0007669"/>
    <property type="project" value="UniProtKB-KW"/>
</dbReference>
<dbReference type="GO" id="GO:0039693">
    <property type="term" value="P:viral DNA genome replication"/>
    <property type="evidence" value="ECO:0007669"/>
    <property type="project" value="UniProtKB-UniRule"/>
</dbReference>
<dbReference type="CDD" id="cd19483">
    <property type="entry name" value="RecA-like_Gp4D_helicase"/>
    <property type="match status" value="1"/>
</dbReference>
<dbReference type="CDD" id="cd01029">
    <property type="entry name" value="TOPRIM_primases"/>
    <property type="match status" value="1"/>
</dbReference>
<dbReference type="Gene3D" id="2.20.25.10">
    <property type="match status" value="1"/>
</dbReference>
<dbReference type="Gene3D" id="2.20.25.180">
    <property type="match status" value="1"/>
</dbReference>
<dbReference type="Gene3D" id="3.40.1360.10">
    <property type="match status" value="1"/>
</dbReference>
<dbReference type="Gene3D" id="3.40.50.300">
    <property type="entry name" value="P-loop containing nucleotide triphosphate hydrolases"/>
    <property type="match status" value="1"/>
</dbReference>
<dbReference type="HAMAP" id="MF_04154">
    <property type="entry name" value="Helic_Prim_T7"/>
    <property type="match status" value="1"/>
</dbReference>
<dbReference type="InterPro" id="IPR007694">
    <property type="entry name" value="DNA_helicase_DnaB-like_C"/>
</dbReference>
<dbReference type="InterPro" id="IPR048774">
    <property type="entry name" value="Helic-prim_T7_N"/>
</dbReference>
<dbReference type="InterPro" id="IPR046394">
    <property type="entry name" value="Helic_Prim_T7"/>
</dbReference>
<dbReference type="InterPro" id="IPR027417">
    <property type="entry name" value="P-loop_NTPase"/>
</dbReference>
<dbReference type="InterPro" id="IPR013237">
    <property type="entry name" value="Phage_T7_Gp4_N"/>
</dbReference>
<dbReference type="InterPro" id="IPR034154">
    <property type="entry name" value="TOPRIM_DnaG/twinkle"/>
</dbReference>
<dbReference type="InterPro" id="IPR006171">
    <property type="entry name" value="TOPRIM_dom"/>
</dbReference>
<dbReference type="InterPro" id="IPR027032">
    <property type="entry name" value="Twinkle-like"/>
</dbReference>
<dbReference type="PANTHER" id="PTHR12873">
    <property type="entry name" value="T7-LIKE MITOCHONDRIAL DNA HELICASE"/>
    <property type="match status" value="1"/>
</dbReference>
<dbReference type="PANTHER" id="PTHR12873:SF0">
    <property type="entry name" value="TWINKLE MTDNA HELICASE"/>
    <property type="match status" value="1"/>
</dbReference>
<dbReference type="Pfam" id="PF03796">
    <property type="entry name" value="DnaB_C"/>
    <property type="match status" value="1"/>
</dbReference>
<dbReference type="Pfam" id="PF21268">
    <property type="entry name" value="Helic-prim_T7_N"/>
    <property type="match status" value="1"/>
</dbReference>
<dbReference type="Pfam" id="PF13155">
    <property type="entry name" value="Toprim_2"/>
    <property type="match status" value="1"/>
</dbReference>
<dbReference type="SMART" id="SM00778">
    <property type="entry name" value="Prim_Zn_Ribbon"/>
    <property type="match status" value="1"/>
</dbReference>
<dbReference type="SMART" id="SM00493">
    <property type="entry name" value="TOPRIM"/>
    <property type="match status" value="1"/>
</dbReference>
<dbReference type="SUPFAM" id="SSF56731">
    <property type="entry name" value="DNA primase core"/>
    <property type="match status" value="1"/>
</dbReference>
<dbReference type="SUPFAM" id="SSF52540">
    <property type="entry name" value="P-loop containing nucleoside triphosphate hydrolases"/>
    <property type="match status" value="1"/>
</dbReference>
<dbReference type="SUPFAM" id="SSF57783">
    <property type="entry name" value="Zinc beta-ribbon"/>
    <property type="match status" value="1"/>
</dbReference>
<dbReference type="PROSITE" id="PS51199">
    <property type="entry name" value="SF4_HELICASE"/>
    <property type="match status" value="1"/>
</dbReference>
<dbReference type="PROSITE" id="PS50880">
    <property type="entry name" value="TOPRIM"/>
    <property type="match status" value="1"/>
</dbReference>
<comment type="function">
    <text evidence="2">ATP-dependent DNA helicase and primase essential for viral DNA replication and recombination. The helicase moves 5' -&gt; 3' on the lagging strand template, unwinding the DNA duplex ahead of the leading strand polymerase at the replication fork and generating ssDNA for both leading and lagging strand synthesis. ATP or dTTP hydrolysis propels each helicase domain to translocate sequentially along DNA. Mediates strand transfer when a joint molecule is available and participates in recombinational DNA repair through its role in strand exchange. Primase activity synthesizes short RNA primers at the sequence 5'-GTC-3' on the lagging strand that the polymerase elongates using dNTPs and providing the primase is still present.</text>
</comment>
<comment type="catalytic activity">
    <reaction evidence="2">
        <text>ATP + H2O = ADP + phosphate + H(+)</text>
        <dbReference type="Rhea" id="RHEA:13065"/>
        <dbReference type="ChEBI" id="CHEBI:15377"/>
        <dbReference type="ChEBI" id="CHEBI:15378"/>
        <dbReference type="ChEBI" id="CHEBI:30616"/>
        <dbReference type="ChEBI" id="CHEBI:43474"/>
        <dbReference type="ChEBI" id="CHEBI:456216"/>
        <dbReference type="EC" id="3.6.4.12"/>
    </reaction>
</comment>
<comment type="cofactor">
    <cofactor evidence="2">
        <name>Mg(2+)</name>
        <dbReference type="ChEBI" id="CHEBI:18420"/>
    </cofactor>
    <text evidence="2">Binds 2 Mg(2+), one of which is catalytic.</text>
</comment>
<comment type="subunit">
    <text evidence="2">Homohexamer. Assembles as a hexamer onto linear or circular ssDNA in the presence of ATP or dTTP. Interacts (via C-terminus) with the viral DNA polymerase that is bound to DNA; this interaction is essential to initiate leading-strand DNA synthesis. The priming complex consists of 2 DNA polymerases and 1 helicase-primase hexamer that assemble on the DNA template. Interacts with the single-stranded DNA-binding protein. Part of the replicase complex that includes the DNA polymerase, the primase/helicase and the single-stranded DNA binding protein.</text>
</comment>
<comment type="alternative products">
    <event type="alternative initiation"/>
    <isoform>
        <id>P20315-1</id>
        <name>4A</name>
        <sequence type="displayed"/>
    </isoform>
    <isoform>
        <id>P20315-2</id>
        <name>4B</name>
        <sequence type="described" ref="VSP_018682"/>
    </isoform>
    <text evidence="1">Isoform 4A contains the primase/helicase region, whereas isoform 4B contains only the helicase region.</text>
</comment>
<comment type="domain">
    <text evidence="2">The N-terminus zinc finger domain is essential for delivering the primed DNA template to the DNA polymerase. The central core domain contains the primase activity. The C-terminus region is responsible for the helicase activity and binds 1 Mg(2+)-dTTP.</text>
</comment>
<comment type="similarity">
    <text evidence="2">Belongs to the Teseptimavirus DNA helicase/primase family.</text>
</comment>
<organism>
    <name type="scientific">Enterobacteria phage T3</name>
    <name type="common">Bacteriophage T3</name>
    <dbReference type="NCBI Taxonomy" id="10759"/>
    <lineage>
        <taxon>Viruses</taxon>
        <taxon>Duplodnaviria</taxon>
        <taxon>Heunggongvirae</taxon>
        <taxon>Uroviricota</taxon>
        <taxon>Caudoviricetes</taxon>
        <taxon>Autographiviridae</taxon>
        <taxon>Studiervirinae</taxon>
        <taxon>Teetrevirus</taxon>
        <taxon>Teetrevirus T3</taxon>
    </lineage>
</organism>
<accession>P20315</accession>